<reference key="1">
    <citation type="submission" date="2005-10" db="EMBL/GenBank/DDBJ databases">
        <title>Complete sequence of Pelobacter carbinolicus DSM 2380.</title>
        <authorList>
            <person name="Copeland A."/>
            <person name="Lucas S."/>
            <person name="Lapidus A."/>
            <person name="Barry K."/>
            <person name="Detter J.C."/>
            <person name="Glavina T."/>
            <person name="Hammon N."/>
            <person name="Israni S."/>
            <person name="Pitluck S."/>
            <person name="Chertkov O."/>
            <person name="Schmutz J."/>
            <person name="Larimer F."/>
            <person name="Land M."/>
            <person name="Kyrpides N."/>
            <person name="Ivanova N."/>
            <person name="Richardson P."/>
        </authorList>
    </citation>
    <scope>NUCLEOTIDE SEQUENCE [LARGE SCALE GENOMIC DNA]</scope>
    <source>
        <strain>DSM 2380 / NBRC 103641 / GraBd1</strain>
    </source>
</reference>
<organism>
    <name type="scientific">Syntrophotalea carbinolica (strain DSM 2380 / NBRC 103641 / GraBd1)</name>
    <name type="common">Pelobacter carbinolicus</name>
    <dbReference type="NCBI Taxonomy" id="338963"/>
    <lineage>
        <taxon>Bacteria</taxon>
        <taxon>Pseudomonadati</taxon>
        <taxon>Thermodesulfobacteriota</taxon>
        <taxon>Desulfuromonadia</taxon>
        <taxon>Desulfuromonadales</taxon>
        <taxon>Syntrophotaleaceae</taxon>
        <taxon>Syntrophotalea</taxon>
    </lineage>
</organism>
<proteinExistence type="inferred from homology"/>
<gene>
    <name evidence="1" type="primary">rpsR</name>
    <name type="ordered locus">Pcar_1998</name>
</gene>
<accession>Q3A318</accession>
<comment type="function">
    <text evidence="1">Binds as a heterodimer with protein bS6 to the central domain of the 16S rRNA, where it helps stabilize the platform of the 30S subunit.</text>
</comment>
<comment type="subunit">
    <text evidence="1">Part of the 30S ribosomal subunit. Forms a tight heterodimer with protein bS6.</text>
</comment>
<comment type="similarity">
    <text evidence="1">Belongs to the bacterial ribosomal protein bS18 family.</text>
</comment>
<dbReference type="EMBL" id="CP000142">
    <property type="protein sequence ID" value="ABA89239.1"/>
    <property type="molecule type" value="Genomic_DNA"/>
</dbReference>
<dbReference type="RefSeq" id="WP_011341749.1">
    <property type="nucleotide sequence ID" value="NC_007498.2"/>
</dbReference>
<dbReference type="SMR" id="Q3A318"/>
<dbReference type="STRING" id="338963.Pcar_1998"/>
<dbReference type="KEGG" id="pca:Pcar_1998"/>
<dbReference type="eggNOG" id="COG0238">
    <property type="taxonomic scope" value="Bacteria"/>
</dbReference>
<dbReference type="HOGENOM" id="CLU_148710_2_2_7"/>
<dbReference type="OrthoDB" id="9812008at2"/>
<dbReference type="Proteomes" id="UP000002534">
    <property type="component" value="Chromosome"/>
</dbReference>
<dbReference type="GO" id="GO:0022627">
    <property type="term" value="C:cytosolic small ribosomal subunit"/>
    <property type="evidence" value="ECO:0007669"/>
    <property type="project" value="TreeGrafter"/>
</dbReference>
<dbReference type="GO" id="GO:0070181">
    <property type="term" value="F:small ribosomal subunit rRNA binding"/>
    <property type="evidence" value="ECO:0007669"/>
    <property type="project" value="TreeGrafter"/>
</dbReference>
<dbReference type="GO" id="GO:0003735">
    <property type="term" value="F:structural constituent of ribosome"/>
    <property type="evidence" value="ECO:0007669"/>
    <property type="project" value="InterPro"/>
</dbReference>
<dbReference type="GO" id="GO:0006412">
    <property type="term" value="P:translation"/>
    <property type="evidence" value="ECO:0007669"/>
    <property type="project" value="UniProtKB-UniRule"/>
</dbReference>
<dbReference type="Gene3D" id="4.10.640.10">
    <property type="entry name" value="Ribosomal protein S18"/>
    <property type="match status" value="1"/>
</dbReference>
<dbReference type="HAMAP" id="MF_00270">
    <property type="entry name" value="Ribosomal_bS18"/>
    <property type="match status" value="1"/>
</dbReference>
<dbReference type="InterPro" id="IPR001648">
    <property type="entry name" value="Ribosomal_bS18"/>
</dbReference>
<dbReference type="InterPro" id="IPR018275">
    <property type="entry name" value="Ribosomal_bS18_CS"/>
</dbReference>
<dbReference type="InterPro" id="IPR036870">
    <property type="entry name" value="Ribosomal_bS18_sf"/>
</dbReference>
<dbReference type="NCBIfam" id="TIGR00165">
    <property type="entry name" value="S18"/>
    <property type="match status" value="1"/>
</dbReference>
<dbReference type="PANTHER" id="PTHR13479">
    <property type="entry name" value="30S RIBOSOMAL PROTEIN S18"/>
    <property type="match status" value="1"/>
</dbReference>
<dbReference type="PANTHER" id="PTHR13479:SF40">
    <property type="entry name" value="SMALL RIBOSOMAL SUBUNIT PROTEIN BS18M"/>
    <property type="match status" value="1"/>
</dbReference>
<dbReference type="Pfam" id="PF01084">
    <property type="entry name" value="Ribosomal_S18"/>
    <property type="match status" value="1"/>
</dbReference>
<dbReference type="PRINTS" id="PR00974">
    <property type="entry name" value="RIBOSOMALS18"/>
</dbReference>
<dbReference type="SUPFAM" id="SSF46911">
    <property type="entry name" value="Ribosomal protein S18"/>
    <property type="match status" value="1"/>
</dbReference>
<dbReference type="PROSITE" id="PS00057">
    <property type="entry name" value="RIBOSOMAL_S18"/>
    <property type="match status" value="1"/>
</dbReference>
<protein>
    <recommendedName>
        <fullName evidence="1">Small ribosomal subunit protein bS18</fullName>
    </recommendedName>
    <alternativeName>
        <fullName evidence="2">30S ribosomal protein S18</fullName>
    </alternativeName>
</protein>
<feature type="chain" id="PRO_0000345524" description="Small ribosomal subunit protein bS18">
    <location>
        <begin position="1"/>
        <end position="91"/>
    </location>
</feature>
<sequence length="91" mass="10632">MAERTTSGTPAKRSVRRRFSRRKGCRFCADNTLKIDYKEIRNLRYFITERGKIVPRRISGNCAEHQRKIREAIKRARNIALLPFTAGHSLD</sequence>
<keyword id="KW-1185">Reference proteome</keyword>
<keyword id="KW-0687">Ribonucleoprotein</keyword>
<keyword id="KW-0689">Ribosomal protein</keyword>
<keyword id="KW-0694">RNA-binding</keyword>
<keyword id="KW-0699">rRNA-binding</keyword>
<evidence type="ECO:0000255" key="1">
    <source>
        <dbReference type="HAMAP-Rule" id="MF_00270"/>
    </source>
</evidence>
<evidence type="ECO:0000305" key="2"/>
<name>RS18_SYNC1</name>